<comment type="function">
    <text evidence="1">The alpha subunit is responsible for the aldol cleavage of indoleglycerol phosphate to indole and glyceraldehyde 3-phosphate.</text>
</comment>
<comment type="catalytic activity">
    <reaction evidence="1">
        <text>(1S,2R)-1-C-(indol-3-yl)glycerol 3-phosphate + L-serine = D-glyceraldehyde 3-phosphate + L-tryptophan + H2O</text>
        <dbReference type="Rhea" id="RHEA:10532"/>
        <dbReference type="ChEBI" id="CHEBI:15377"/>
        <dbReference type="ChEBI" id="CHEBI:33384"/>
        <dbReference type="ChEBI" id="CHEBI:57912"/>
        <dbReference type="ChEBI" id="CHEBI:58866"/>
        <dbReference type="ChEBI" id="CHEBI:59776"/>
        <dbReference type="EC" id="4.2.1.20"/>
    </reaction>
</comment>
<comment type="pathway">
    <text evidence="1">Amino-acid biosynthesis; L-tryptophan biosynthesis; L-tryptophan from chorismate: step 5/5.</text>
</comment>
<comment type="subunit">
    <text evidence="1">Tetramer of two alpha and two beta chains.</text>
</comment>
<comment type="similarity">
    <text evidence="1">Belongs to the TrpA family.</text>
</comment>
<proteinExistence type="inferred from homology"/>
<dbReference type="EC" id="4.2.1.20" evidence="1"/>
<dbReference type="EMBL" id="CP000250">
    <property type="protein sequence ID" value="ABD05345.1"/>
    <property type="molecule type" value="Genomic_DNA"/>
</dbReference>
<dbReference type="RefSeq" id="WP_011439535.1">
    <property type="nucleotide sequence ID" value="NC_007778.1"/>
</dbReference>
<dbReference type="SMR" id="Q2J2G5"/>
<dbReference type="STRING" id="316058.RPB_0634"/>
<dbReference type="KEGG" id="rpb:RPB_0634"/>
<dbReference type="eggNOG" id="COG0159">
    <property type="taxonomic scope" value="Bacteria"/>
</dbReference>
<dbReference type="HOGENOM" id="CLU_016734_0_0_5"/>
<dbReference type="OrthoDB" id="9804578at2"/>
<dbReference type="UniPathway" id="UPA00035">
    <property type="reaction ID" value="UER00044"/>
</dbReference>
<dbReference type="Proteomes" id="UP000008809">
    <property type="component" value="Chromosome"/>
</dbReference>
<dbReference type="GO" id="GO:0005829">
    <property type="term" value="C:cytosol"/>
    <property type="evidence" value="ECO:0007669"/>
    <property type="project" value="TreeGrafter"/>
</dbReference>
<dbReference type="GO" id="GO:0004834">
    <property type="term" value="F:tryptophan synthase activity"/>
    <property type="evidence" value="ECO:0007669"/>
    <property type="project" value="UniProtKB-UniRule"/>
</dbReference>
<dbReference type="CDD" id="cd04724">
    <property type="entry name" value="Tryptophan_synthase_alpha"/>
    <property type="match status" value="1"/>
</dbReference>
<dbReference type="FunFam" id="3.20.20.70:FF:000037">
    <property type="entry name" value="Tryptophan synthase alpha chain"/>
    <property type="match status" value="1"/>
</dbReference>
<dbReference type="Gene3D" id="3.20.20.70">
    <property type="entry name" value="Aldolase class I"/>
    <property type="match status" value="1"/>
</dbReference>
<dbReference type="HAMAP" id="MF_00131">
    <property type="entry name" value="Trp_synth_alpha"/>
    <property type="match status" value="1"/>
</dbReference>
<dbReference type="InterPro" id="IPR013785">
    <property type="entry name" value="Aldolase_TIM"/>
</dbReference>
<dbReference type="InterPro" id="IPR011060">
    <property type="entry name" value="RibuloseP-bd_barrel"/>
</dbReference>
<dbReference type="InterPro" id="IPR018204">
    <property type="entry name" value="Trp_synthase_alpha_AS"/>
</dbReference>
<dbReference type="InterPro" id="IPR002028">
    <property type="entry name" value="Trp_synthase_suA"/>
</dbReference>
<dbReference type="NCBIfam" id="TIGR00262">
    <property type="entry name" value="trpA"/>
    <property type="match status" value="1"/>
</dbReference>
<dbReference type="PANTHER" id="PTHR43406:SF1">
    <property type="entry name" value="TRYPTOPHAN SYNTHASE ALPHA CHAIN, CHLOROPLASTIC"/>
    <property type="match status" value="1"/>
</dbReference>
<dbReference type="PANTHER" id="PTHR43406">
    <property type="entry name" value="TRYPTOPHAN SYNTHASE, ALPHA CHAIN"/>
    <property type="match status" value="1"/>
</dbReference>
<dbReference type="Pfam" id="PF00290">
    <property type="entry name" value="Trp_syntA"/>
    <property type="match status" value="1"/>
</dbReference>
<dbReference type="SUPFAM" id="SSF51366">
    <property type="entry name" value="Ribulose-phoshate binding barrel"/>
    <property type="match status" value="1"/>
</dbReference>
<dbReference type="PROSITE" id="PS00167">
    <property type="entry name" value="TRP_SYNTHASE_ALPHA"/>
    <property type="match status" value="1"/>
</dbReference>
<organism>
    <name type="scientific">Rhodopseudomonas palustris (strain HaA2)</name>
    <dbReference type="NCBI Taxonomy" id="316058"/>
    <lineage>
        <taxon>Bacteria</taxon>
        <taxon>Pseudomonadati</taxon>
        <taxon>Pseudomonadota</taxon>
        <taxon>Alphaproteobacteria</taxon>
        <taxon>Hyphomicrobiales</taxon>
        <taxon>Nitrobacteraceae</taxon>
        <taxon>Rhodopseudomonas</taxon>
    </lineage>
</organism>
<sequence>MTTRIDIRFAQLKREGRPAFVTFVMAGDPDLATSLQLLKALPTAGADIIEIGMPFTDPMADGPAIQAAGLRALHGGTTLHKTLELVGDFRKDDATTPVVLMGYYNPIYIYGVDAFLADAKAAGVDGLIIVDLPPEEDAELCLPAMKAGLNFIRLATPTTDEKRLPAVLANTSGFVYYVSITGITGSASADSVAVGDAVARIKRHTDLPVCVGFGIRTPEGARAIAAQADGAVVGSALIDALQKTLDTDNRATQATVGAVADLVASLAAGVRGAQQAAE</sequence>
<keyword id="KW-0028">Amino-acid biosynthesis</keyword>
<keyword id="KW-0057">Aromatic amino acid biosynthesis</keyword>
<keyword id="KW-0456">Lyase</keyword>
<keyword id="KW-1185">Reference proteome</keyword>
<keyword id="KW-0822">Tryptophan biosynthesis</keyword>
<accession>Q2J2G5</accession>
<reference key="1">
    <citation type="submission" date="2006-01" db="EMBL/GenBank/DDBJ databases">
        <title>Complete sequence of Rhodopseudomonas palustris HaA2.</title>
        <authorList>
            <consortium name="US DOE Joint Genome Institute"/>
            <person name="Copeland A."/>
            <person name="Lucas S."/>
            <person name="Lapidus A."/>
            <person name="Barry K."/>
            <person name="Detter J.C."/>
            <person name="Glavina T."/>
            <person name="Hammon N."/>
            <person name="Israni S."/>
            <person name="Pitluck S."/>
            <person name="Chain P."/>
            <person name="Malfatti S."/>
            <person name="Shin M."/>
            <person name="Vergez L."/>
            <person name="Schmutz J."/>
            <person name="Larimer F."/>
            <person name="Land M."/>
            <person name="Hauser L."/>
            <person name="Pelletier D.A."/>
            <person name="Kyrpides N."/>
            <person name="Anderson I."/>
            <person name="Oda Y."/>
            <person name="Harwood C.S."/>
            <person name="Richardson P."/>
        </authorList>
    </citation>
    <scope>NUCLEOTIDE SEQUENCE [LARGE SCALE GENOMIC DNA]</scope>
    <source>
        <strain>HaA2</strain>
    </source>
</reference>
<evidence type="ECO:0000255" key="1">
    <source>
        <dbReference type="HAMAP-Rule" id="MF_00131"/>
    </source>
</evidence>
<feature type="chain" id="PRO_1000018268" description="Tryptophan synthase alpha chain">
    <location>
        <begin position="1"/>
        <end position="278"/>
    </location>
</feature>
<feature type="active site" description="Proton acceptor" evidence="1">
    <location>
        <position position="50"/>
    </location>
</feature>
<feature type="active site" description="Proton acceptor" evidence="1">
    <location>
        <position position="61"/>
    </location>
</feature>
<protein>
    <recommendedName>
        <fullName evidence="1">Tryptophan synthase alpha chain</fullName>
        <ecNumber evidence="1">4.2.1.20</ecNumber>
    </recommendedName>
</protein>
<name>TRPA_RHOP2</name>
<gene>
    <name evidence="1" type="primary">trpA</name>
    <name type="ordered locus">RPB_0634</name>
</gene>